<keyword id="KW-0067">ATP-binding</keyword>
<keyword id="KW-0963">Cytoplasm</keyword>
<keyword id="KW-0227">DNA damage</keyword>
<keyword id="KW-0233">DNA recombination</keyword>
<keyword id="KW-0234">DNA repair</keyword>
<keyword id="KW-0238">DNA-binding</keyword>
<keyword id="KW-0378">Hydrolase</keyword>
<keyword id="KW-0547">Nucleotide-binding</keyword>
<keyword id="KW-1185">Reference proteome</keyword>
<name>RUVB_CELJU</name>
<sequence>MIETDRLIAPTAKEREDQLDRAVRPKVLADYVGQPAVREQMEIFICAAKKRREALDHTLVFGPPGLGKTTLANIIANEMGVSLKSTSGPVLEKAGDLAAMLTNLEAGDVLFIDEIHRLSPVVEEILYPAMEDFQLDIMIGEGPAARSIKLDLPPFTLVGATTRAGLLTSPLRDRFGIVQRLEFYNVKDLTHIVARSAALLGVSMEELGAAEIAKRSRGTPRIANRLLRRVRDFAEVKGDGRITSELADKALNMLNVDERGFDHMDRRLLLAMINNFDGGPVGVESLAAAISEDRGTIEDVIEPYLIQQGFMARTPRGRVLTTNAYLHFGLSMPKRLQESQGGEGIA</sequence>
<proteinExistence type="inferred from homology"/>
<accession>B3PB59</accession>
<comment type="function">
    <text evidence="1">The RuvA-RuvB-RuvC complex processes Holliday junction (HJ) DNA during genetic recombination and DNA repair, while the RuvA-RuvB complex plays an important role in the rescue of blocked DNA replication forks via replication fork reversal (RFR). RuvA specifically binds to HJ cruciform DNA, conferring on it an open structure. The RuvB hexamer acts as an ATP-dependent pump, pulling dsDNA into and through the RuvAB complex. RuvB forms 2 homohexamers on either side of HJ DNA bound by 1 or 2 RuvA tetramers; 4 subunits per hexamer contact DNA at a time. Coordinated motions by a converter formed by DNA-disengaged RuvB subunits stimulates ATP hydrolysis and nucleotide exchange. Immobilization of the converter enables RuvB to convert the ATP-contained energy into a lever motion, pulling 2 nucleotides of DNA out of the RuvA tetramer per ATP hydrolyzed, thus driving DNA branch migration. The RuvB motors rotate together with the DNA substrate, which together with the progressing nucleotide cycle form the mechanistic basis for DNA recombination by continuous HJ branch migration. Branch migration allows RuvC to scan DNA until it finds its consensus sequence, where it cleaves and resolves cruciform DNA.</text>
</comment>
<comment type="catalytic activity">
    <reaction evidence="1">
        <text>ATP + H2O = ADP + phosphate + H(+)</text>
        <dbReference type="Rhea" id="RHEA:13065"/>
        <dbReference type="ChEBI" id="CHEBI:15377"/>
        <dbReference type="ChEBI" id="CHEBI:15378"/>
        <dbReference type="ChEBI" id="CHEBI:30616"/>
        <dbReference type="ChEBI" id="CHEBI:43474"/>
        <dbReference type="ChEBI" id="CHEBI:456216"/>
    </reaction>
</comment>
<comment type="subunit">
    <text evidence="1">Homohexamer. Forms an RuvA(8)-RuvB(12)-Holliday junction (HJ) complex. HJ DNA is sandwiched between 2 RuvA tetramers; dsDNA enters through RuvA and exits via RuvB. An RuvB hexamer assembles on each DNA strand where it exits the tetramer. Each RuvB hexamer is contacted by two RuvA subunits (via domain III) on 2 adjacent RuvB subunits; this complex drives branch migration. In the full resolvosome a probable DNA-RuvA(4)-RuvB(12)-RuvC(2) complex forms which resolves the HJ.</text>
</comment>
<comment type="subcellular location">
    <subcellularLocation>
        <location evidence="1">Cytoplasm</location>
    </subcellularLocation>
</comment>
<comment type="domain">
    <text evidence="1">Has 3 domains, the large (RuvB-L) and small ATPase (RuvB-S) domains and the C-terminal head (RuvB-H) domain. The head domain binds DNA, while the ATPase domains jointly bind ATP, ADP or are empty depending on the state of the subunit in the translocation cycle. During a single DNA translocation step the structure of each domain remains the same, but their relative positions change.</text>
</comment>
<comment type="similarity">
    <text evidence="1">Belongs to the RuvB family.</text>
</comment>
<organism>
    <name type="scientific">Cellvibrio japonicus (strain Ueda107)</name>
    <name type="common">Pseudomonas fluorescens subsp. cellulosa</name>
    <dbReference type="NCBI Taxonomy" id="498211"/>
    <lineage>
        <taxon>Bacteria</taxon>
        <taxon>Pseudomonadati</taxon>
        <taxon>Pseudomonadota</taxon>
        <taxon>Gammaproteobacteria</taxon>
        <taxon>Cellvibrionales</taxon>
        <taxon>Cellvibrionaceae</taxon>
        <taxon>Cellvibrio</taxon>
    </lineage>
</organism>
<feature type="chain" id="PRO_1000089626" description="Holliday junction branch migration complex subunit RuvB">
    <location>
        <begin position="1"/>
        <end position="346"/>
    </location>
</feature>
<feature type="region of interest" description="Large ATPase domain (RuvB-L)" evidence="1">
    <location>
        <begin position="4"/>
        <end position="184"/>
    </location>
</feature>
<feature type="region of interest" description="Small ATPAse domain (RuvB-S)" evidence="1">
    <location>
        <begin position="185"/>
        <end position="255"/>
    </location>
</feature>
<feature type="region of interest" description="Head domain (RuvB-H)" evidence="1">
    <location>
        <begin position="258"/>
        <end position="346"/>
    </location>
</feature>
<feature type="binding site" evidence="1">
    <location>
        <position position="24"/>
    </location>
    <ligand>
        <name>ATP</name>
        <dbReference type="ChEBI" id="CHEBI:30616"/>
    </ligand>
</feature>
<feature type="binding site" evidence="1">
    <location>
        <position position="65"/>
    </location>
    <ligand>
        <name>ATP</name>
        <dbReference type="ChEBI" id="CHEBI:30616"/>
    </ligand>
</feature>
<feature type="binding site" evidence="1">
    <location>
        <position position="68"/>
    </location>
    <ligand>
        <name>ATP</name>
        <dbReference type="ChEBI" id="CHEBI:30616"/>
    </ligand>
</feature>
<feature type="binding site" evidence="1">
    <location>
        <position position="69"/>
    </location>
    <ligand>
        <name>ATP</name>
        <dbReference type="ChEBI" id="CHEBI:30616"/>
    </ligand>
</feature>
<feature type="binding site" evidence="1">
    <location>
        <position position="69"/>
    </location>
    <ligand>
        <name>Mg(2+)</name>
        <dbReference type="ChEBI" id="CHEBI:18420"/>
    </ligand>
</feature>
<feature type="binding site" evidence="1">
    <location>
        <position position="70"/>
    </location>
    <ligand>
        <name>ATP</name>
        <dbReference type="ChEBI" id="CHEBI:30616"/>
    </ligand>
</feature>
<feature type="binding site" evidence="1">
    <location>
        <begin position="131"/>
        <end position="133"/>
    </location>
    <ligand>
        <name>ATP</name>
        <dbReference type="ChEBI" id="CHEBI:30616"/>
    </ligand>
</feature>
<feature type="binding site" evidence="1">
    <location>
        <position position="174"/>
    </location>
    <ligand>
        <name>ATP</name>
        <dbReference type="ChEBI" id="CHEBI:30616"/>
    </ligand>
</feature>
<feature type="binding site" evidence="1">
    <location>
        <position position="184"/>
    </location>
    <ligand>
        <name>ATP</name>
        <dbReference type="ChEBI" id="CHEBI:30616"/>
    </ligand>
</feature>
<feature type="binding site" evidence="1">
    <location>
        <position position="221"/>
    </location>
    <ligand>
        <name>ATP</name>
        <dbReference type="ChEBI" id="CHEBI:30616"/>
    </ligand>
</feature>
<feature type="binding site" evidence="1">
    <location>
        <position position="294"/>
    </location>
    <ligand>
        <name>DNA</name>
        <dbReference type="ChEBI" id="CHEBI:16991"/>
    </ligand>
</feature>
<feature type="binding site" evidence="1">
    <location>
        <position position="313"/>
    </location>
    <ligand>
        <name>DNA</name>
        <dbReference type="ChEBI" id="CHEBI:16991"/>
    </ligand>
</feature>
<feature type="binding site" evidence="1">
    <location>
        <position position="318"/>
    </location>
    <ligand>
        <name>DNA</name>
        <dbReference type="ChEBI" id="CHEBI:16991"/>
    </ligand>
</feature>
<evidence type="ECO:0000255" key="1">
    <source>
        <dbReference type="HAMAP-Rule" id="MF_00016"/>
    </source>
</evidence>
<reference key="1">
    <citation type="journal article" date="2008" name="J. Bacteriol.">
        <title>Insights into plant cell wall degradation from the genome sequence of the soil bacterium Cellvibrio japonicus.</title>
        <authorList>
            <person name="DeBoy R.T."/>
            <person name="Mongodin E.F."/>
            <person name="Fouts D.E."/>
            <person name="Tailford L.E."/>
            <person name="Khouri H."/>
            <person name="Emerson J.B."/>
            <person name="Mohamoud Y."/>
            <person name="Watkins K."/>
            <person name="Henrissat B."/>
            <person name="Gilbert H.J."/>
            <person name="Nelson K.E."/>
        </authorList>
    </citation>
    <scope>NUCLEOTIDE SEQUENCE [LARGE SCALE GENOMIC DNA]</scope>
    <source>
        <strain>Ueda107</strain>
    </source>
</reference>
<protein>
    <recommendedName>
        <fullName evidence="1">Holliday junction branch migration complex subunit RuvB</fullName>
        <ecNumber evidence="1">3.6.4.-</ecNumber>
    </recommendedName>
</protein>
<gene>
    <name evidence="1" type="primary">ruvB</name>
    <name type="ordered locus">CJA_1031</name>
</gene>
<dbReference type="EC" id="3.6.4.-" evidence="1"/>
<dbReference type="EMBL" id="CP000934">
    <property type="protein sequence ID" value="ACE83239.1"/>
    <property type="molecule type" value="Genomic_DNA"/>
</dbReference>
<dbReference type="RefSeq" id="WP_012486679.1">
    <property type="nucleotide sequence ID" value="NC_010995.1"/>
</dbReference>
<dbReference type="SMR" id="B3PB59"/>
<dbReference type="STRING" id="498211.CJA_1031"/>
<dbReference type="KEGG" id="cja:CJA_1031"/>
<dbReference type="eggNOG" id="COG2255">
    <property type="taxonomic scope" value="Bacteria"/>
</dbReference>
<dbReference type="HOGENOM" id="CLU_055599_1_0_6"/>
<dbReference type="OrthoDB" id="9804478at2"/>
<dbReference type="Proteomes" id="UP000001036">
    <property type="component" value="Chromosome"/>
</dbReference>
<dbReference type="GO" id="GO:0005737">
    <property type="term" value="C:cytoplasm"/>
    <property type="evidence" value="ECO:0007669"/>
    <property type="project" value="UniProtKB-SubCell"/>
</dbReference>
<dbReference type="GO" id="GO:0048476">
    <property type="term" value="C:Holliday junction resolvase complex"/>
    <property type="evidence" value="ECO:0007669"/>
    <property type="project" value="UniProtKB-UniRule"/>
</dbReference>
<dbReference type="GO" id="GO:0005524">
    <property type="term" value="F:ATP binding"/>
    <property type="evidence" value="ECO:0007669"/>
    <property type="project" value="UniProtKB-UniRule"/>
</dbReference>
<dbReference type="GO" id="GO:0016887">
    <property type="term" value="F:ATP hydrolysis activity"/>
    <property type="evidence" value="ECO:0007669"/>
    <property type="project" value="InterPro"/>
</dbReference>
<dbReference type="GO" id="GO:0000400">
    <property type="term" value="F:four-way junction DNA binding"/>
    <property type="evidence" value="ECO:0007669"/>
    <property type="project" value="UniProtKB-UniRule"/>
</dbReference>
<dbReference type="GO" id="GO:0009378">
    <property type="term" value="F:four-way junction helicase activity"/>
    <property type="evidence" value="ECO:0007669"/>
    <property type="project" value="InterPro"/>
</dbReference>
<dbReference type="GO" id="GO:0006310">
    <property type="term" value="P:DNA recombination"/>
    <property type="evidence" value="ECO:0007669"/>
    <property type="project" value="UniProtKB-UniRule"/>
</dbReference>
<dbReference type="GO" id="GO:0006281">
    <property type="term" value="P:DNA repair"/>
    <property type="evidence" value="ECO:0007669"/>
    <property type="project" value="UniProtKB-UniRule"/>
</dbReference>
<dbReference type="CDD" id="cd00009">
    <property type="entry name" value="AAA"/>
    <property type="match status" value="1"/>
</dbReference>
<dbReference type="FunFam" id="1.10.10.10:FF:000086">
    <property type="entry name" value="Holliday junction ATP-dependent DNA helicase RuvB"/>
    <property type="match status" value="1"/>
</dbReference>
<dbReference type="FunFam" id="1.10.8.60:FF:000023">
    <property type="entry name" value="Holliday junction ATP-dependent DNA helicase RuvB"/>
    <property type="match status" value="1"/>
</dbReference>
<dbReference type="FunFam" id="3.40.50.300:FF:000073">
    <property type="entry name" value="Holliday junction ATP-dependent DNA helicase RuvB"/>
    <property type="match status" value="1"/>
</dbReference>
<dbReference type="Gene3D" id="1.10.8.60">
    <property type="match status" value="1"/>
</dbReference>
<dbReference type="Gene3D" id="3.40.50.300">
    <property type="entry name" value="P-loop containing nucleotide triphosphate hydrolases"/>
    <property type="match status" value="1"/>
</dbReference>
<dbReference type="Gene3D" id="1.10.10.10">
    <property type="entry name" value="Winged helix-like DNA-binding domain superfamily/Winged helix DNA-binding domain"/>
    <property type="match status" value="1"/>
</dbReference>
<dbReference type="HAMAP" id="MF_00016">
    <property type="entry name" value="DNA_HJ_migration_RuvB"/>
    <property type="match status" value="1"/>
</dbReference>
<dbReference type="InterPro" id="IPR003593">
    <property type="entry name" value="AAA+_ATPase"/>
</dbReference>
<dbReference type="InterPro" id="IPR041445">
    <property type="entry name" value="AAA_lid_4"/>
</dbReference>
<dbReference type="InterPro" id="IPR004605">
    <property type="entry name" value="DNA_helicase_Holl-junc_RuvB"/>
</dbReference>
<dbReference type="InterPro" id="IPR027417">
    <property type="entry name" value="P-loop_NTPase"/>
</dbReference>
<dbReference type="InterPro" id="IPR008824">
    <property type="entry name" value="RuvB-like_N"/>
</dbReference>
<dbReference type="InterPro" id="IPR008823">
    <property type="entry name" value="RuvB_C"/>
</dbReference>
<dbReference type="InterPro" id="IPR036388">
    <property type="entry name" value="WH-like_DNA-bd_sf"/>
</dbReference>
<dbReference type="InterPro" id="IPR036390">
    <property type="entry name" value="WH_DNA-bd_sf"/>
</dbReference>
<dbReference type="NCBIfam" id="NF000868">
    <property type="entry name" value="PRK00080.1"/>
    <property type="match status" value="1"/>
</dbReference>
<dbReference type="NCBIfam" id="TIGR00635">
    <property type="entry name" value="ruvB"/>
    <property type="match status" value="1"/>
</dbReference>
<dbReference type="PANTHER" id="PTHR42848">
    <property type="match status" value="1"/>
</dbReference>
<dbReference type="PANTHER" id="PTHR42848:SF1">
    <property type="entry name" value="HOLLIDAY JUNCTION BRANCH MIGRATION COMPLEX SUBUNIT RUVB"/>
    <property type="match status" value="1"/>
</dbReference>
<dbReference type="Pfam" id="PF17864">
    <property type="entry name" value="AAA_lid_4"/>
    <property type="match status" value="1"/>
</dbReference>
<dbReference type="Pfam" id="PF05491">
    <property type="entry name" value="RuvB_C"/>
    <property type="match status" value="1"/>
</dbReference>
<dbReference type="Pfam" id="PF05496">
    <property type="entry name" value="RuvB_N"/>
    <property type="match status" value="1"/>
</dbReference>
<dbReference type="SMART" id="SM00382">
    <property type="entry name" value="AAA"/>
    <property type="match status" value="1"/>
</dbReference>
<dbReference type="SUPFAM" id="SSF52540">
    <property type="entry name" value="P-loop containing nucleoside triphosphate hydrolases"/>
    <property type="match status" value="1"/>
</dbReference>
<dbReference type="SUPFAM" id="SSF46785">
    <property type="entry name" value="Winged helix' DNA-binding domain"/>
    <property type="match status" value="1"/>
</dbReference>